<dbReference type="EC" id="2.7.7.48"/>
<dbReference type="EMBL" id="L18870">
    <property type="protein sequence ID" value="AAA20211.1"/>
    <property type="molecule type" value="Genomic_RNA"/>
</dbReference>
<dbReference type="EMBL" id="L18870">
    <property type="protein sequence ID" value="AAA20212.2"/>
    <property type="molecule type" value="Genomic_RNA"/>
</dbReference>
<dbReference type="RefSeq" id="NP_619711.1">
    <property type="nucleotide sequence ID" value="NC_003530.1"/>
</dbReference>
<dbReference type="KEGG" id="vg:19484575"/>
<dbReference type="KEGG" id="vg:956637"/>
<dbReference type="Proteomes" id="UP000000574">
    <property type="component" value="Genome"/>
</dbReference>
<dbReference type="GO" id="GO:0000166">
    <property type="term" value="F:nucleotide binding"/>
    <property type="evidence" value="ECO:0007669"/>
    <property type="project" value="UniProtKB-KW"/>
</dbReference>
<dbReference type="GO" id="GO:0003723">
    <property type="term" value="F:RNA binding"/>
    <property type="evidence" value="ECO:0007669"/>
    <property type="project" value="InterPro"/>
</dbReference>
<dbReference type="GO" id="GO:0003968">
    <property type="term" value="F:RNA-directed RNA polymerase activity"/>
    <property type="evidence" value="ECO:0007669"/>
    <property type="project" value="UniProtKB-KW"/>
</dbReference>
<dbReference type="GO" id="GO:0039694">
    <property type="term" value="P:viral RNA genome replication"/>
    <property type="evidence" value="ECO:0007669"/>
    <property type="project" value="InterPro"/>
</dbReference>
<dbReference type="GO" id="GO:0075523">
    <property type="term" value="P:viral translational frameshifting"/>
    <property type="evidence" value="ECO:0007669"/>
    <property type="project" value="UniProtKB-KW"/>
</dbReference>
<dbReference type="CDD" id="cd23235">
    <property type="entry name" value="Regressovirinae_RdRp"/>
    <property type="match status" value="1"/>
</dbReference>
<dbReference type="Gene3D" id="3.30.70.270">
    <property type="match status" value="1"/>
</dbReference>
<dbReference type="InterPro" id="IPR043502">
    <property type="entry name" value="DNA/RNA_pol_sf"/>
</dbReference>
<dbReference type="InterPro" id="IPR043128">
    <property type="entry name" value="Rev_trsase/Diguanyl_cyclase"/>
</dbReference>
<dbReference type="InterPro" id="IPR007094">
    <property type="entry name" value="RNA-dir_pol_PSvirus"/>
</dbReference>
<dbReference type="InterPro" id="IPR002166">
    <property type="entry name" value="RNA_pol_HCV"/>
</dbReference>
<dbReference type="Pfam" id="PF00998">
    <property type="entry name" value="RdRP_3"/>
    <property type="match status" value="1"/>
</dbReference>
<dbReference type="SUPFAM" id="SSF56672">
    <property type="entry name" value="DNA/RNA polymerases"/>
    <property type="match status" value="1"/>
</dbReference>
<dbReference type="PROSITE" id="PS50507">
    <property type="entry name" value="RDRP_SSRNA_POS"/>
    <property type="match status" value="1"/>
</dbReference>
<organismHost>
    <name type="scientific">Dianthus barbatus</name>
    <dbReference type="NCBI Taxonomy" id="278075"/>
</organismHost>
<organismHost>
    <name type="scientific">Dianthus caryophyllus</name>
    <name type="common">Carnation</name>
    <name type="synonym">Clove pink</name>
    <dbReference type="NCBI Taxonomy" id="3570"/>
</organismHost>
<protein>
    <recommendedName>
        <fullName>RNA-directed RNA polymerase</fullName>
        <ecNumber>2.7.7.48</ecNumber>
    </recommendedName>
    <alternativeName>
        <fullName>Protein p88</fullName>
    </alternativeName>
</protein>
<sequence length="769" mass="87776">MAIFELFSFDIDKLLVWVSKFSPGKILSAICRLGLDSWNNFRKWFWGLNFDKHEWAVDHFMPLMPRFSSDMDEVAKRIVTPKSKPKLEDCLEIDTAVEECFNEECFEPQEDGSMKLKRVAAPQQIKRVRTGMIEDAISAVEARIRNRHMIMGDDMGLVDEAAVRATAMDICGEYKINEHHTRCIIYAAAYRAMTPDQESIDATKMAYNPKSQARRDLVSILRKNISFGGFKSLEDFLSAPVSFPVEDAPYQILGIPEIKVADKRASRVCKFKRVVGLPSLSAGQSVCVHKTSLHNMIVSLEQRVFRVKNETGEFVVPPQPSKGAFDSISYFREAWKKKLYSKGPVVKSSIDDVVACYSSEKKKLYQKGAATLSHRPLHWRDSKVRAFIKVEKLECDKKAPVPRTIQPRSKRYNLCIGRYLRLNEKRMLDAIDAVFGEKTVLSGLDNKAQGRAIAKKWSKYESPIGIGLDASRFDQHCSKDALKFEHSFYRECFPDDKTSPDLLDWQLENEGSALMPTESLVKYRTRCRMSGDINTGLGNKILMCSMVHAYLKEVGVNASLANNGDDCVLFCEKGDFNRINDSLREWFLCRGFNMVVEEPVECLERVVFCRSQPVCVATKWAMVRQLGSLSRDCFSTQNWLNPTTFRDAMNALGQCNGIINDGVPVHMAQAKRMYAAGGNRKFDLKALHKQMEYSWRDRLGARTNLLWSEVEDSTRLSYFRAFGIEPAVQRIVEGYFSESKISEEGRQTNFLPTHYSRLHKDLLVPRYLN</sequence>
<organism>
    <name type="scientific">Carnation ringspot virus (isolate Lommel)</name>
    <name type="common">CRSV</name>
    <dbReference type="NCBI Taxonomy" id="652597"/>
    <lineage>
        <taxon>Viruses</taxon>
        <taxon>Riboviria</taxon>
        <taxon>Orthornavirae</taxon>
        <taxon>Kitrinoviricota</taxon>
        <taxon>Tolucaviricetes</taxon>
        <taxon>Tolivirales</taxon>
        <taxon>Tombusviridae</taxon>
        <taxon>Regressovirinae</taxon>
        <taxon>Dianthovirus</taxon>
        <taxon>Dianthovirus dianthi</taxon>
    </lineage>
</organism>
<gene>
    <name type="ORF">ORF1</name>
</gene>
<comment type="function">
    <text>Probable polymerase.</text>
</comment>
<comment type="catalytic activity">
    <reaction evidence="1">
        <text>RNA(n) + a ribonucleoside 5'-triphosphate = RNA(n+1) + diphosphate</text>
        <dbReference type="Rhea" id="RHEA:21248"/>
        <dbReference type="Rhea" id="RHEA-COMP:14527"/>
        <dbReference type="Rhea" id="RHEA-COMP:17342"/>
        <dbReference type="ChEBI" id="CHEBI:33019"/>
        <dbReference type="ChEBI" id="CHEBI:61557"/>
        <dbReference type="ChEBI" id="CHEBI:140395"/>
        <dbReference type="EC" id="2.7.7.48"/>
    </reaction>
</comment>
<comment type="alternative products">
    <event type="ribosomal frameshifting"/>
    <isoform>
        <id>Q66096-1</id>
        <name>RNA-directed RNA polymerase</name>
        <name>p88 kDa protein</name>
        <name>88K fusion protein</name>
        <sequence type="displayed"/>
    </isoform>
    <isoform>
        <id>Q66096-2</id>
        <name>p27 protein</name>
        <name>p27 kDa protein</name>
        <sequence type="described" ref="VSP_039744"/>
    </isoform>
</comment>
<comment type="miscellaneous">
    <molecule>Isoform RNA-directed RNA polymerase</molecule>
    <text>Produced by ribosomal frameshifting between codons 236 and 237.</text>
</comment>
<comment type="miscellaneous">
    <molecule>Isoform p27 protein</molecule>
    <text evidence="2">Produced by conventional translation.</text>
</comment>
<comment type="similarity">
    <text evidence="2">Belongs to the tombusviridae RNA polymerase family.</text>
</comment>
<reference key="1">
    <citation type="journal article" date="1994" name="J. Gen. Virol.">
        <title>Nucleotide sequence of carnation ringspot dianthovirus RNA-1.</title>
        <authorList>
            <person name="Ryabov E.V."/>
            <person name="Generozov E.V."/>
            <person name="Kendall T.L."/>
            <person name="Lommel S.A."/>
            <person name="Zavriev S.K."/>
        </authorList>
    </citation>
    <scope>NUCLEOTIDE SEQUENCE [GENOMIC RNA] (ISOFORMS RNA-DIRECTED RNA POLYMERASE AND P27 PROTEIN)</scope>
</reference>
<reference key="2">
    <citation type="submission" date="1999-03" db="EMBL/GenBank/DDBJ databases">
        <authorList>
            <person name="Sit T.L."/>
            <person name="Lommel S.A."/>
        </authorList>
    </citation>
    <scope>SEQUENCE REVISION</scope>
</reference>
<name>RDRP_CRSVL</name>
<proteinExistence type="inferred from homology"/>
<accession>Q66096</accession>
<accession>Q66097</accession>
<evidence type="ECO:0000255" key="1">
    <source>
        <dbReference type="PROSITE-ProRule" id="PRU00539"/>
    </source>
</evidence>
<evidence type="ECO:0000305" key="2"/>
<feature type="chain" id="PRO_0000398304" description="RNA-directed RNA polymerase">
    <location>
        <begin position="1"/>
        <end position="769"/>
    </location>
</feature>
<feature type="domain" description="RdRp catalytic" evidence="1">
    <location>
        <begin position="463"/>
        <end position="579"/>
    </location>
</feature>
<feature type="splice variant" id="VSP_039744" description="In isoform p27 protein." evidence="2">
    <location>
        <begin position="237"/>
        <end position="769"/>
    </location>
</feature>
<keyword id="KW-0547">Nucleotide-binding</keyword>
<keyword id="KW-0548">Nucleotidyltransferase</keyword>
<keyword id="KW-1185">Reference proteome</keyword>
<keyword id="KW-0688">Ribosomal frameshifting</keyword>
<keyword id="KW-0696">RNA-directed RNA polymerase</keyword>
<keyword id="KW-0808">Transferase</keyword>
<keyword id="KW-0693">Viral RNA replication</keyword>